<reference key="1">
    <citation type="submission" date="2005-09" db="EMBL/GenBank/DDBJ databases">
        <authorList>
            <person name="Glass J.I."/>
            <person name="Lartigue C."/>
            <person name="Pfannkoch C."/>
            <person name="Baden-Tillson H."/>
            <person name="Smith H.O."/>
            <person name="Venter J.C."/>
            <person name="Roske K."/>
            <person name="Wise K.S."/>
            <person name="Calcutt M.J."/>
            <person name="Nelson W.C."/>
            <person name="Nierman W.C."/>
        </authorList>
    </citation>
    <scope>NUCLEOTIDE SEQUENCE [LARGE SCALE GENOMIC DNA]</scope>
    <source>
        <strain>California kid / ATCC 27343 / NCTC 10154</strain>
    </source>
</reference>
<feature type="chain" id="PRO_0000303438" description="tRNA N6-adenosine threonylcarbamoyltransferase">
    <location>
        <begin position="1"/>
        <end position="319"/>
    </location>
</feature>
<feature type="binding site" evidence="1">
    <location>
        <position position="110"/>
    </location>
    <ligand>
        <name>Fe cation</name>
        <dbReference type="ChEBI" id="CHEBI:24875"/>
    </ligand>
</feature>
<feature type="binding site" evidence="1">
    <location>
        <position position="114"/>
    </location>
    <ligand>
        <name>Fe cation</name>
        <dbReference type="ChEBI" id="CHEBI:24875"/>
    </ligand>
</feature>
<feature type="binding site" evidence="1">
    <location>
        <begin position="132"/>
        <end position="136"/>
    </location>
    <ligand>
        <name>substrate</name>
    </ligand>
</feature>
<feature type="binding site" evidence="1">
    <location>
        <position position="165"/>
    </location>
    <ligand>
        <name>substrate</name>
    </ligand>
</feature>
<feature type="binding site" evidence="1">
    <location>
        <position position="178"/>
    </location>
    <ligand>
        <name>substrate</name>
    </ligand>
</feature>
<feature type="binding site" evidence="1">
    <location>
        <position position="182"/>
    </location>
    <ligand>
        <name>substrate</name>
    </ligand>
</feature>
<feature type="binding site" evidence="1">
    <location>
        <position position="271"/>
    </location>
    <ligand>
        <name>substrate</name>
    </ligand>
</feature>
<feature type="binding site" evidence="1">
    <location>
        <position position="300"/>
    </location>
    <ligand>
        <name>Fe cation</name>
        <dbReference type="ChEBI" id="CHEBI:24875"/>
    </ligand>
</feature>
<gene>
    <name evidence="1" type="primary">tsaD</name>
    <name type="synonym">gcp</name>
    <name type="ordered locus">MCAP_0821</name>
</gene>
<name>TSAD_MYCCT</name>
<dbReference type="EC" id="2.3.1.234" evidence="1"/>
<dbReference type="EMBL" id="CP000123">
    <property type="protein sequence ID" value="ABC01727.1"/>
    <property type="molecule type" value="Genomic_DNA"/>
</dbReference>
<dbReference type="RefSeq" id="WP_011387652.1">
    <property type="nucleotide sequence ID" value="NC_007633.1"/>
</dbReference>
<dbReference type="SMR" id="Q2SR45"/>
<dbReference type="GeneID" id="23778227"/>
<dbReference type="KEGG" id="mcp:MCAP_0821"/>
<dbReference type="HOGENOM" id="CLU_023208_0_1_14"/>
<dbReference type="PhylomeDB" id="Q2SR45"/>
<dbReference type="Proteomes" id="UP000001928">
    <property type="component" value="Chromosome"/>
</dbReference>
<dbReference type="GO" id="GO:0005737">
    <property type="term" value="C:cytoplasm"/>
    <property type="evidence" value="ECO:0007669"/>
    <property type="project" value="UniProtKB-SubCell"/>
</dbReference>
<dbReference type="GO" id="GO:0005506">
    <property type="term" value="F:iron ion binding"/>
    <property type="evidence" value="ECO:0007669"/>
    <property type="project" value="UniProtKB-UniRule"/>
</dbReference>
<dbReference type="GO" id="GO:0061711">
    <property type="term" value="F:N(6)-L-threonylcarbamoyladenine synthase activity"/>
    <property type="evidence" value="ECO:0007669"/>
    <property type="project" value="UniProtKB-EC"/>
</dbReference>
<dbReference type="GO" id="GO:0002949">
    <property type="term" value="P:tRNA threonylcarbamoyladenosine modification"/>
    <property type="evidence" value="ECO:0007669"/>
    <property type="project" value="UniProtKB-UniRule"/>
</dbReference>
<dbReference type="CDD" id="cd24133">
    <property type="entry name" value="ASKHA_NBD_TsaD_bac"/>
    <property type="match status" value="1"/>
</dbReference>
<dbReference type="FunFam" id="3.30.420.40:FF:000012">
    <property type="entry name" value="tRNA N6-adenosine threonylcarbamoyltransferase"/>
    <property type="match status" value="1"/>
</dbReference>
<dbReference type="FunFam" id="3.30.420.40:FF:000040">
    <property type="entry name" value="tRNA N6-adenosine threonylcarbamoyltransferase"/>
    <property type="match status" value="1"/>
</dbReference>
<dbReference type="Gene3D" id="3.30.420.40">
    <property type="match status" value="2"/>
</dbReference>
<dbReference type="HAMAP" id="MF_01445">
    <property type="entry name" value="TsaD"/>
    <property type="match status" value="1"/>
</dbReference>
<dbReference type="InterPro" id="IPR043129">
    <property type="entry name" value="ATPase_NBD"/>
</dbReference>
<dbReference type="InterPro" id="IPR000905">
    <property type="entry name" value="Gcp-like_dom"/>
</dbReference>
<dbReference type="InterPro" id="IPR017861">
    <property type="entry name" value="KAE1/TsaD"/>
</dbReference>
<dbReference type="InterPro" id="IPR022450">
    <property type="entry name" value="TsaD"/>
</dbReference>
<dbReference type="NCBIfam" id="TIGR00329">
    <property type="entry name" value="gcp_kae1"/>
    <property type="match status" value="1"/>
</dbReference>
<dbReference type="NCBIfam" id="TIGR03723">
    <property type="entry name" value="T6A_TsaD_YgjD"/>
    <property type="match status" value="1"/>
</dbReference>
<dbReference type="PANTHER" id="PTHR11735">
    <property type="entry name" value="TRNA N6-ADENOSINE THREONYLCARBAMOYLTRANSFERASE"/>
    <property type="match status" value="1"/>
</dbReference>
<dbReference type="PANTHER" id="PTHR11735:SF6">
    <property type="entry name" value="TRNA N6-ADENOSINE THREONYLCARBAMOYLTRANSFERASE, MITOCHONDRIAL"/>
    <property type="match status" value="1"/>
</dbReference>
<dbReference type="Pfam" id="PF00814">
    <property type="entry name" value="TsaD"/>
    <property type="match status" value="1"/>
</dbReference>
<dbReference type="PRINTS" id="PR00789">
    <property type="entry name" value="OSIALOPTASE"/>
</dbReference>
<dbReference type="SUPFAM" id="SSF53067">
    <property type="entry name" value="Actin-like ATPase domain"/>
    <property type="match status" value="2"/>
</dbReference>
<sequence>MKILAIESSCDEFSISIIDNNKILTNIISSQIKDHQVFGGVVPELAARLHVQNFNWVLKAALSQSNLNIEEIDYIAYTKSPGLIGSLIIGKLVAETISLYINKPILALDHIQGHIFGASIENEFIYPVLAMVVSGGHTQIEIINSANDFQIIGSTRDDAIGECYDKVARVLGLSYPGGPILDKLALKGNKDFYSLPVLKDDNTYDFSYSGLKTACINLIHNLNQKKQEINLENFAASFQYTATNIIEKKLEKAIKEFKPKTLTVAGGVSANSEIRKIILKLGQKYNIKNTFVPKMSYCTDNAAMIAKLAYEKILLKNKL</sequence>
<organism>
    <name type="scientific">Mycoplasma capricolum subsp. capricolum (strain California kid / ATCC 27343 / NCTC 10154)</name>
    <dbReference type="NCBI Taxonomy" id="340047"/>
    <lineage>
        <taxon>Bacteria</taxon>
        <taxon>Bacillati</taxon>
        <taxon>Mycoplasmatota</taxon>
        <taxon>Mollicutes</taxon>
        <taxon>Mycoplasmataceae</taxon>
        <taxon>Mycoplasma</taxon>
    </lineage>
</organism>
<comment type="function">
    <text evidence="1">Required for the formation of a threonylcarbamoyl group on adenosine at position 37 (t(6)A37) in tRNAs that read codons beginning with adenine. Is involved in the transfer of the threonylcarbamoyl moiety of threonylcarbamoyl-AMP (TC-AMP) to the N6 group of A37, together with TsaE and TsaB. TsaD likely plays a direct catalytic role in this reaction.</text>
</comment>
<comment type="catalytic activity">
    <reaction evidence="1">
        <text>L-threonylcarbamoyladenylate + adenosine(37) in tRNA = N(6)-L-threonylcarbamoyladenosine(37) in tRNA + AMP + H(+)</text>
        <dbReference type="Rhea" id="RHEA:37059"/>
        <dbReference type="Rhea" id="RHEA-COMP:10162"/>
        <dbReference type="Rhea" id="RHEA-COMP:10163"/>
        <dbReference type="ChEBI" id="CHEBI:15378"/>
        <dbReference type="ChEBI" id="CHEBI:73682"/>
        <dbReference type="ChEBI" id="CHEBI:74411"/>
        <dbReference type="ChEBI" id="CHEBI:74418"/>
        <dbReference type="ChEBI" id="CHEBI:456215"/>
        <dbReference type="EC" id="2.3.1.234"/>
    </reaction>
</comment>
<comment type="cofactor">
    <cofactor evidence="1">
        <name>Fe(2+)</name>
        <dbReference type="ChEBI" id="CHEBI:29033"/>
    </cofactor>
    <text evidence="1">Binds 1 Fe(2+) ion per subunit.</text>
</comment>
<comment type="subcellular location">
    <subcellularLocation>
        <location evidence="1">Cytoplasm</location>
    </subcellularLocation>
</comment>
<comment type="similarity">
    <text evidence="1">Belongs to the KAE1 / TsaD family.</text>
</comment>
<evidence type="ECO:0000255" key="1">
    <source>
        <dbReference type="HAMAP-Rule" id="MF_01445"/>
    </source>
</evidence>
<protein>
    <recommendedName>
        <fullName evidence="1">tRNA N6-adenosine threonylcarbamoyltransferase</fullName>
        <ecNumber evidence="1">2.3.1.234</ecNumber>
    </recommendedName>
    <alternativeName>
        <fullName evidence="1">N6-L-threonylcarbamoyladenine synthase</fullName>
        <shortName evidence="1">t(6)A synthase</shortName>
    </alternativeName>
    <alternativeName>
        <fullName evidence="1">t(6)A37 threonylcarbamoyladenosine biosynthesis protein TsaD</fullName>
    </alternativeName>
    <alternativeName>
        <fullName evidence="1">tRNA threonylcarbamoyladenosine biosynthesis protein TsaD</fullName>
    </alternativeName>
</protein>
<accession>Q2SR45</accession>
<keyword id="KW-0012">Acyltransferase</keyword>
<keyword id="KW-0963">Cytoplasm</keyword>
<keyword id="KW-0408">Iron</keyword>
<keyword id="KW-0479">Metal-binding</keyword>
<keyword id="KW-0808">Transferase</keyword>
<keyword id="KW-0819">tRNA processing</keyword>
<proteinExistence type="inferred from homology"/>